<protein>
    <recommendedName>
        <fullName evidence="1">NAD(P)H-quinone oxidoreductase subunit 3, chloroplastic</fullName>
        <ecNumber evidence="1">7.1.1.-</ecNumber>
    </recommendedName>
    <alternativeName>
        <fullName evidence="1">NAD(P)H dehydrogenase subunit 3</fullName>
    </alternativeName>
    <alternativeName>
        <fullName evidence="1">NADH-plastoquinone oxidoreductase subunit 3</fullName>
    </alternativeName>
</protein>
<feature type="chain" id="PRO_0000362811" description="NAD(P)H-quinone oxidoreductase subunit 3, chloroplastic">
    <location>
        <begin position="1"/>
        <end position="120"/>
    </location>
</feature>
<feature type="transmembrane region" description="Helical" evidence="1">
    <location>
        <begin position="9"/>
        <end position="29"/>
    </location>
</feature>
<feature type="transmembrane region" description="Helical" evidence="1">
    <location>
        <begin position="64"/>
        <end position="84"/>
    </location>
</feature>
<feature type="transmembrane region" description="Helical" evidence="1">
    <location>
        <begin position="88"/>
        <end position="108"/>
    </location>
</feature>
<comment type="function">
    <text evidence="1">NDH shuttles electrons from NAD(P)H:plastoquinone, via FMN and iron-sulfur (Fe-S) centers, to quinones in the photosynthetic chain and possibly in a chloroplast respiratory chain. The immediate electron acceptor for the enzyme in this species is believed to be plastoquinone. Couples the redox reaction to proton translocation, and thus conserves the redox energy in a proton gradient.</text>
</comment>
<comment type="catalytic activity">
    <reaction evidence="1">
        <text>a plastoquinone + NADH + (n+1) H(+)(in) = a plastoquinol + NAD(+) + n H(+)(out)</text>
        <dbReference type="Rhea" id="RHEA:42608"/>
        <dbReference type="Rhea" id="RHEA-COMP:9561"/>
        <dbReference type="Rhea" id="RHEA-COMP:9562"/>
        <dbReference type="ChEBI" id="CHEBI:15378"/>
        <dbReference type="ChEBI" id="CHEBI:17757"/>
        <dbReference type="ChEBI" id="CHEBI:57540"/>
        <dbReference type="ChEBI" id="CHEBI:57945"/>
        <dbReference type="ChEBI" id="CHEBI:62192"/>
    </reaction>
</comment>
<comment type="catalytic activity">
    <reaction evidence="1">
        <text>a plastoquinone + NADPH + (n+1) H(+)(in) = a plastoquinol + NADP(+) + n H(+)(out)</text>
        <dbReference type="Rhea" id="RHEA:42612"/>
        <dbReference type="Rhea" id="RHEA-COMP:9561"/>
        <dbReference type="Rhea" id="RHEA-COMP:9562"/>
        <dbReference type="ChEBI" id="CHEBI:15378"/>
        <dbReference type="ChEBI" id="CHEBI:17757"/>
        <dbReference type="ChEBI" id="CHEBI:57783"/>
        <dbReference type="ChEBI" id="CHEBI:58349"/>
        <dbReference type="ChEBI" id="CHEBI:62192"/>
    </reaction>
</comment>
<comment type="subunit">
    <text evidence="1">NDH is composed of at least 16 different subunits, 5 of which are encoded in the nucleus.</text>
</comment>
<comment type="subcellular location">
    <subcellularLocation>
        <location evidence="1">Plastid</location>
        <location evidence="1">Chloroplast thylakoid membrane</location>
        <topology evidence="1">Multi-pass membrane protein</topology>
    </subcellularLocation>
</comment>
<comment type="similarity">
    <text evidence="1">Belongs to the complex I subunit 3 family.</text>
</comment>
<evidence type="ECO:0000255" key="1">
    <source>
        <dbReference type="HAMAP-Rule" id="MF_01394"/>
    </source>
</evidence>
<dbReference type="EC" id="7.1.1.-" evidence="1"/>
<dbReference type="EMBL" id="EU325680">
    <property type="protein sequence ID" value="ACF08645.1"/>
    <property type="molecule type" value="Genomic_DNA"/>
</dbReference>
<dbReference type="RefSeq" id="YP_002000492.1">
    <property type="nucleotide sequence ID" value="NC_011032.1"/>
</dbReference>
<dbReference type="SMR" id="B3TN56"/>
<dbReference type="FunCoup" id="B3TN56">
    <property type="interactions" value="30"/>
</dbReference>
<dbReference type="STRING" id="15368.B3TN56"/>
<dbReference type="GeneID" id="6439845"/>
<dbReference type="KEGG" id="bdi:6439845"/>
<dbReference type="eggNOG" id="KOG4662">
    <property type="taxonomic scope" value="Eukaryota"/>
</dbReference>
<dbReference type="HOGENOM" id="CLU_119549_1_1_1"/>
<dbReference type="InParanoid" id="B3TN56"/>
<dbReference type="OMA" id="YVYAFLY"/>
<dbReference type="Proteomes" id="UP000008810">
    <property type="component" value="Chloroplast"/>
</dbReference>
<dbReference type="GO" id="GO:0009535">
    <property type="term" value="C:chloroplast thylakoid membrane"/>
    <property type="evidence" value="ECO:0007669"/>
    <property type="project" value="UniProtKB-SubCell"/>
</dbReference>
<dbReference type="GO" id="GO:0030964">
    <property type="term" value="C:NADH dehydrogenase complex"/>
    <property type="evidence" value="ECO:0000318"/>
    <property type="project" value="GO_Central"/>
</dbReference>
<dbReference type="GO" id="GO:0008137">
    <property type="term" value="F:NADH dehydrogenase (ubiquinone) activity"/>
    <property type="evidence" value="ECO:0000318"/>
    <property type="project" value="GO_Central"/>
</dbReference>
<dbReference type="GO" id="GO:0048038">
    <property type="term" value="F:quinone binding"/>
    <property type="evidence" value="ECO:0007669"/>
    <property type="project" value="UniProtKB-KW"/>
</dbReference>
<dbReference type="GO" id="GO:0019684">
    <property type="term" value="P:photosynthesis, light reaction"/>
    <property type="evidence" value="ECO:0007669"/>
    <property type="project" value="UniProtKB-UniRule"/>
</dbReference>
<dbReference type="FunFam" id="1.20.58.1610:FF:000001">
    <property type="entry name" value="NAD(P)H-quinone oxidoreductase subunit 3, chloroplastic"/>
    <property type="match status" value="1"/>
</dbReference>
<dbReference type="Gene3D" id="1.20.58.1610">
    <property type="entry name" value="NADH:ubiquinone/plastoquinone oxidoreductase, chain 3"/>
    <property type="match status" value="1"/>
</dbReference>
<dbReference type="HAMAP" id="MF_01394">
    <property type="entry name" value="NDH1_NuoA"/>
    <property type="match status" value="1"/>
</dbReference>
<dbReference type="InterPro" id="IPR023043">
    <property type="entry name" value="NAD(P)H_OxRDtase_bac/plastid"/>
</dbReference>
<dbReference type="InterPro" id="IPR000440">
    <property type="entry name" value="NADH_UbQ/plastoQ_OxRdtase_su3"/>
</dbReference>
<dbReference type="InterPro" id="IPR038430">
    <property type="entry name" value="NDAH_ubi_oxred_su3_sf"/>
</dbReference>
<dbReference type="PANTHER" id="PTHR11058">
    <property type="entry name" value="NADH-UBIQUINONE OXIDOREDUCTASE CHAIN 3"/>
    <property type="match status" value="1"/>
</dbReference>
<dbReference type="PANTHER" id="PTHR11058:SF9">
    <property type="entry name" value="NADH-UBIQUINONE OXIDOREDUCTASE CHAIN 3"/>
    <property type="match status" value="1"/>
</dbReference>
<dbReference type="Pfam" id="PF00507">
    <property type="entry name" value="Oxidored_q4"/>
    <property type="match status" value="1"/>
</dbReference>
<proteinExistence type="inferred from homology"/>
<organism>
    <name type="scientific">Brachypodium distachyon</name>
    <name type="common">Purple false brome</name>
    <name type="synonym">Trachynia distachya</name>
    <dbReference type="NCBI Taxonomy" id="15368"/>
    <lineage>
        <taxon>Eukaryota</taxon>
        <taxon>Viridiplantae</taxon>
        <taxon>Streptophyta</taxon>
        <taxon>Embryophyta</taxon>
        <taxon>Tracheophyta</taxon>
        <taxon>Spermatophyta</taxon>
        <taxon>Magnoliopsida</taxon>
        <taxon>Liliopsida</taxon>
        <taxon>Poales</taxon>
        <taxon>Poaceae</taxon>
        <taxon>BOP clade</taxon>
        <taxon>Pooideae</taxon>
        <taxon>Stipodae</taxon>
        <taxon>Brachypodieae</taxon>
        <taxon>Brachypodium</taxon>
    </lineage>
</organism>
<keyword id="KW-0150">Chloroplast</keyword>
<keyword id="KW-0472">Membrane</keyword>
<keyword id="KW-0520">NAD</keyword>
<keyword id="KW-0521">NADP</keyword>
<keyword id="KW-0934">Plastid</keyword>
<keyword id="KW-0618">Plastoquinone</keyword>
<keyword id="KW-0874">Quinone</keyword>
<keyword id="KW-1185">Reference proteome</keyword>
<keyword id="KW-0793">Thylakoid</keyword>
<keyword id="KW-1278">Translocase</keyword>
<keyword id="KW-0812">Transmembrane</keyword>
<keyword id="KW-1133">Transmembrane helix</keyword>
<keyword id="KW-0813">Transport</keyword>
<sequence length="120" mass="13846">MFLLHEYDIFWTFLIIASLIPILAFWISGLLAPISEGPEKLSSYESGIEPMGGAWLQFRIRYYMFALVFVVFDVETVFLYPWAMSFDVLGVSVFIEAFIFVLILVVGLVYAWRKGALEWS</sequence>
<accession>B3TN56</accession>
<name>NU3C_BRADI</name>
<geneLocation type="chloroplast"/>
<gene>
    <name evidence="1" type="primary">ndhC</name>
</gene>
<reference key="1">
    <citation type="journal article" date="2008" name="BMC Res. Notes">
        <title>The complete chloroplast genome sequence of Brachypodium distachyon: sequence comparison and phylogenetic analysis of eight grass plastomes.</title>
        <authorList>
            <person name="Bortiri E."/>
            <person name="Coleman-Derr D."/>
            <person name="Lazo G.R."/>
            <person name="Anderson O.D."/>
            <person name="Gu Y.Q."/>
        </authorList>
    </citation>
    <scope>NUCLEOTIDE SEQUENCE [LARGE SCALE GENOMIC DNA]</scope>
    <source>
        <strain>cv. Bd21</strain>
    </source>
</reference>